<organism>
    <name type="scientific">Mycobacterium bovis (strain BCG / Pasteur 1173P2)</name>
    <dbReference type="NCBI Taxonomy" id="410289"/>
    <lineage>
        <taxon>Bacteria</taxon>
        <taxon>Bacillati</taxon>
        <taxon>Actinomycetota</taxon>
        <taxon>Actinomycetes</taxon>
        <taxon>Mycobacteriales</taxon>
        <taxon>Mycobacteriaceae</taxon>
        <taxon>Mycobacterium</taxon>
        <taxon>Mycobacterium tuberculosis complex</taxon>
    </lineage>
</organism>
<dbReference type="EC" id="3.1.-.-" evidence="1"/>
<dbReference type="EMBL" id="AM408590">
    <property type="protein sequence ID" value="CAL72565.1"/>
    <property type="molecule type" value="Genomic_DNA"/>
</dbReference>
<dbReference type="SMR" id="A1KLQ2"/>
<dbReference type="KEGG" id="mbb:BCG_2577c"/>
<dbReference type="HOGENOM" id="CLU_098240_0_1_11"/>
<dbReference type="Proteomes" id="UP000001472">
    <property type="component" value="Chromosome"/>
</dbReference>
<dbReference type="GO" id="GO:0005829">
    <property type="term" value="C:cytosol"/>
    <property type="evidence" value="ECO:0007669"/>
    <property type="project" value="TreeGrafter"/>
</dbReference>
<dbReference type="GO" id="GO:0004518">
    <property type="term" value="F:nuclease activity"/>
    <property type="evidence" value="ECO:0007669"/>
    <property type="project" value="UniProtKB-KW"/>
</dbReference>
<dbReference type="GO" id="GO:0000967">
    <property type="term" value="P:rRNA 5'-end processing"/>
    <property type="evidence" value="ECO:0007669"/>
    <property type="project" value="UniProtKB-UniRule"/>
</dbReference>
<dbReference type="CDD" id="cd16964">
    <property type="entry name" value="YqgF"/>
    <property type="match status" value="1"/>
</dbReference>
<dbReference type="FunFam" id="3.30.420.140:FF:000005">
    <property type="entry name" value="Putative pre-16S rRNA nuclease"/>
    <property type="match status" value="1"/>
</dbReference>
<dbReference type="Gene3D" id="3.30.420.140">
    <property type="entry name" value="YqgF/RNase H-like domain"/>
    <property type="match status" value="1"/>
</dbReference>
<dbReference type="HAMAP" id="MF_00651">
    <property type="entry name" value="Nuclease_YqgF"/>
    <property type="match status" value="1"/>
</dbReference>
<dbReference type="InterPro" id="IPR012337">
    <property type="entry name" value="RNaseH-like_sf"/>
</dbReference>
<dbReference type="InterPro" id="IPR005227">
    <property type="entry name" value="YqgF"/>
</dbReference>
<dbReference type="InterPro" id="IPR006641">
    <property type="entry name" value="YqgF/RNaseH-like_dom"/>
</dbReference>
<dbReference type="InterPro" id="IPR037027">
    <property type="entry name" value="YqgF/RNaseH-like_dom_sf"/>
</dbReference>
<dbReference type="NCBIfam" id="TIGR00250">
    <property type="entry name" value="RNAse_H_YqgF"/>
    <property type="match status" value="1"/>
</dbReference>
<dbReference type="PANTHER" id="PTHR33317">
    <property type="entry name" value="POLYNUCLEOTIDYL TRANSFERASE, RIBONUCLEASE H-LIKE SUPERFAMILY PROTEIN"/>
    <property type="match status" value="1"/>
</dbReference>
<dbReference type="PANTHER" id="PTHR33317:SF4">
    <property type="entry name" value="POLYNUCLEOTIDYL TRANSFERASE, RIBONUCLEASE H-LIKE SUPERFAMILY PROTEIN"/>
    <property type="match status" value="1"/>
</dbReference>
<dbReference type="Pfam" id="PF03652">
    <property type="entry name" value="RuvX"/>
    <property type="match status" value="1"/>
</dbReference>
<dbReference type="SMART" id="SM00732">
    <property type="entry name" value="YqgFc"/>
    <property type="match status" value="1"/>
</dbReference>
<dbReference type="SUPFAM" id="SSF53098">
    <property type="entry name" value="Ribonuclease H-like"/>
    <property type="match status" value="1"/>
</dbReference>
<comment type="function">
    <text evidence="1">Could be a nuclease involved in processing of the 5'-end of pre-16S rRNA.</text>
</comment>
<comment type="subcellular location">
    <subcellularLocation>
        <location evidence="1">Cytoplasm</location>
    </subcellularLocation>
</comment>
<comment type="similarity">
    <text evidence="1">Belongs to the YqgF nuclease family.</text>
</comment>
<name>YQGF_MYCBP</name>
<evidence type="ECO:0000255" key="1">
    <source>
        <dbReference type="HAMAP-Rule" id="MF_00651"/>
    </source>
</evidence>
<evidence type="ECO:0000256" key="2">
    <source>
        <dbReference type="SAM" id="MobiDB-lite"/>
    </source>
</evidence>
<protein>
    <recommendedName>
        <fullName evidence="1">Putative pre-16S rRNA nuclease</fullName>
        <ecNumber evidence="1">3.1.-.-</ecNumber>
    </recommendedName>
</protein>
<accession>A1KLQ2</accession>
<proteinExistence type="inferred from homology"/>
<reference key="1">
    <citation type="journal article" date="2007" name="Proc. Natl. Acad. Sci. U.S.A.">
        <title>Genome plasticity of BCG and impact on vaccine efficacy.</title>
        <authorList>
            <person name="Brosch R."/>
            <person name="Gordon S.V."/>
            <person name="Garnier T."/>
            <person name="Eiglmeier K."/>
            <person name="Frigui W."/>
            <person name="Valenti P."/>
            <person name="Dos Santos S."/>
            <person name="Duthoy S."/>
            <person name="Lacroix C."/>
            <person name="Garcia-Pelayo C."/>
            <person name="Inwald J.K."/>
            <person name="Golby P."/>
            <person name="Garcia J.N."/>
            <person name="Hewinson R.G."/>
            <person name="Behr M.A."/>
            <person name="Quail M.A."/>
            <person name="Churcher C."/>
            <person name="Barrell B.G."/>
            <person name="Parkhill J."/>
            <person name="Cole S.T."/>
        </authorList>
    </citation>
    <scope>NUCLEOTIDE SEQUENCE [LARGE SCALE GENOMIC DNA]</scope>
    <source>
        <strain>BCG / Pasteur 1173P2</strain>
    </source>
</reference>
<feature type="chain" id="PRO_1000061535" description="Putative pre-16S rRNA nuclease">
    <location>
        <begin position="1"/>
        <end position="170"/>
    </location>
</feature>
<feature type="region of interest" description="Disordered" evidence="2">
    <location>
        <begin position="1"/>
        <end position="25"/>
    </location>
</feature>
<feature type="compositionally biased region" description="Basic and acidic residues" evidence="2">
    <location>
        <begin position="7"/>
        <end position="21"/>
    </location>
</feature>
<sequence length="170" mass="18065">MVPAQHRPPDRPGDPAHDPGRGRRLGIDVGAARIGVACSDPDAILATPVETVRRDRSGKHLRRLAALAAELEAVEVIVGLPRTLADRIGRSAQDAIELAEALARRVSPTPVRLADERLTTVSAQRSLRQAGVRASEQRAVIDQAAAVAILQSWLDERLAAMAGTQEGSDA</sequence>
<keyword id="KW-0963">Cytoplasm</keyword>
<keyword id="KW-0378">Hydrolase</keyword>
<keyword id="KW-0540">Nuclease</keyword>
<keyword id="KW-0690">Ribosome biogenesis</keyword>
<gene>
    <name type="ordered locus">BCG_2577c</name>
</gene>